<name>4HYPE_AGRFC</name>
<organism>
    <name type="scientific">Agrobacterium fabrum (strain C58 / ATCC 33970)</name>
    <name type="common">Agrobacterium tumefaciens (strain C58)</name>
    <dbReference type="NCBI Taxonomy" id="176299"/>
    <lineage>
        <taxon>Bacteria</taxon>
        <taxon>Pseudomonadati</taxon>
        <taxon>Pseudomonadota</taxon>
        <taxon>Alphaproteobacteria</taxon>
        <taxon>Hyphomicrobiales</taxon>
        <taxon>Rhizobiaceae</taxon>
        <taxon>Rhizobium/Agrobacterium group</taxon>
        <taxon>Agrobacterium</taxon>
        <taxon>Agrobacterium tumefaciens complex</taxon>
    </lineage>
</organism>
<feature type="chain" id="PRO_0000432264" description="4-hydroxyproline 2-epimerase">
    <location>
        <begin position="1"/>
        <end position="345"/>
    </location>
</feature>
<feature type="active site" description="Proton acceptor" evidence="1">
    <location>
        <position position="93"/>
    </location>
</feature>
<feature type="active site" description="Proton donor" evidence="1">
    <location>
        <position position="255"/>
    </location>
</feature>
<feature type="binding site" evidence="1">
    <location>
        <position position="85"/>
    </location>
    <ligand>
        <name>substrate</name>
    </ligand>
</feature>
<feature type="binding site" evidence="1">
    <location>
        <begin position="94"/>
        <end position="95"/>
    </location>
    <ligand>
        <name>substrate</name>
    </ligand>
</feature>
<feature type="binding site" evidence="1">
    <location>
        <position position="251"/>
    </location>
    <ligand>
        <name>substrate</name>
    </ligand>
</feature>
<feature type="binding site" evidence="1">
    <location>
        <begin position="256"/>
        <end position="257"/>
    </location>
    <ligand>
        <name>substrate</name>
    </ligand>
</feature>
<protein>
    <recommendedName>
        <fullName evidence="3">4-hydroxyproline 2-epimerase</fullName>
        <shortName>4Hyp 2-epimerase</shortName>
        <shortName evidence="3">4HypE</shortName>
        <ecNumber evidence="2">5.1.1.8</ecNumber>
    </recommendedName>
</protein>
<sequence length="345" mass="36953">MRWKRTLQLLDVHCEGEIGRVVTGGAPKIPGNTVAEQLHWMNTDPQGEALRRFLTLEPRGTPMGSVDLLLPPKHPDAHAAFVILQPDQAHASSGSNSICATTALLESGMVEMQEPETVIILETAAGLVKATATCRDGRCEKVKLTMVPSFVHELDVSIDTPEWGRVTMDISYGGIFYALVDVRQIGLTIEKANAAKLVAAGMTLKDLVNREMTVVHPEIPAISGVAYVMFRDVDADGSIRTCTTMWPGRADRSPCGTGNSANLATLYARGKVKVGDEYKSRSIIGSEFDVGLSAVTEVAGRPAVIPTIAGRGFTFGLHQVGLDPFDPLGDGFAMTDVWGPEAGNI</sequence>
<comment type="function">
    <text evidence="2">Catalyzes the epimerization of trans-4-hydroxy-L-proline (t4LHyp) to cis-4-hydroxy-D-proline (c4DHyp). May be involved in a degradation pathway of t4LHyp, which would allow A.tumefaciens to grow on t4LHyp as a sole carbon source. Can also catalyze the epimerization of trans-3-hydroxy-L-proline (t3LHyp) to cis-3-hydroxy-D-proline (c3DHyp) in vitro. Displays no proline racemase activity.</text>
</comment>
<comment type="catalytic activity">
    <reaction evidence="2">
        <text>trans-4-hydroxy-L-proline = cis-4-hydroxy-D-proline</text>
        <dbReference type="Rhea" id="RHEA:21152"/>
        <dbReference type="ChEBI" id="CHEBI:57690"/>
        <dbReference type="ChEBI" id="CHEBI:58375"/>
        <dbReference type="EC" id="5.1.1.8"/>
    </reaction>
</comment>
<comment type="biophysicochemical properties">
    <kinetics>
        <KM evidence="2">4.6 mM for trans-4-hydroxy-L-proline</KM>
        <KM evidence="2">25 mM for trans-3-hydroxy-L-proline</KM>
        <text evidence="2">kcat is 0.86 sec(-1) for t4LHyp epimerization. kcat is 4.0 sec(-1) for t3LHyp epimerization.</text>
    </kinetics>
</comment>
<comment type="induction">
    <text evidence="2">Is up-regulated when the bacterium is grown on t4LHyp or t3LHyp as sole carbon source.</text>
</comment>
<comment type="similarity">
    <text evidence="4">Belongs to the proline racemase family.</text>
</comment>
<dbReference type="EC" id="5.1.1.8" evidence="2"/>
<dbReference type="EMBL" id="AE007869">
    <property type="protein sequence ID" value="AAK86213.1"/>
    <property type="molecule type" value="Genomic_DNA"/>
</dbReference>
<dbReference type="PIR" id="AE2625">
    <property type="entry name" value="AE2625"/>
</dbReference>
<dbReference type="PIR" id="D97407">
    <property type="entry name" value="D97407"/>
</dbReference>
<dbReference type="RefSeq" id="NP_353428.1">
    <property type="nucleotide sequence ID" value="NC_003062.2"/>
</dbReference>
<dbReference type="RefSeq" id="WP_010970869.1">
    <property type="nucleotide sequence ID" value="NC_003062.2"/>
</dbReference>
<dbReference type="SMR" id="A9CKB4"/>
<dbReference type="STRING" id="176299.Atu0398"/>
<dbReference type="EnsemblBacteria" id="AAK86213">
    <property type="protein sequence ID" value="AAK86213"/>
    <property type="gene ID" value="Atu0398"/>
</dbReference>
<dbReference type="GeneID" id="1132436"/>
<dbReference type="KEGG" id="atu:Atu0398"/>
<dbReference type="PATRIC" id="fig|176299.10.peg.389"/>
<dbReference type="eggNOG" id="COG3938">
    <property type="taxonomic scope" value="Bacteria"/>
</dbReference>
<dbReference type="HOGENOM" id="CLU_036729_2_0_5"/>
<dbReference type="OrthoDB" id="181267at2"/>
<dbReference type="PhylomeDB" id="A9CKB4"/>
<dbReference type="BioCyc" id="AGRO:ATU0398-MONOMER"/>
<dbReference type="SABIO-RK" id="A9CKB4"/>
<dbReference type="Proteomes" id="UP000000813">
    <property type="component" value="Chromosome circular"/>
</dbReference>
<dbReference type="GO" id="GO:0047580">
    <property type="term" value="F:4-hydroxyproline epimerase activity"/>
    <property type="evidence" value="ECO:0007669"/>
    <property type="project" value="UniProtKB-EC"/>
</dbReference>
<dbReference type="GO" id="GO:0050346">
    <property type="term" value="F:trans-L-3-hydroxyproline dehydratase activity"/>
    <property type="evidence" value="ECO:0007669"/>
    <property type="project" value="UniProtKB-ARBA"/>
</dbReference>
<dbReference type="FunFam" id="3.10.310.10:FF:000005">
    <property type="entry name" value="Proline racemase"/>
    <property type="match status" value="1"/>
</dbReference>
<dbReference type="Gene3D" id="3.10.310.10">
    <property type="entry name" value="Diaminopimelate Epimerase, Chain A, domain 1"/>
    <property type="match status" value="2"/>
</dbReference>
<dbReference type="InterPro" id="IPR008794">
    <property type="entry name" value="Pro_racemase_fam"/>
</dbReference>
<dbReference type="PANTHER" id="PTHR33442:SF5">
    <property type="entry name" value="BIFUNCTIONAL TRANS-3-HYDROXY-L-PROLINE DEHYDRATASE_2-EPIMERASE"/>
    <property type="match status" value="1"/>
</dbReference>
<dbReference type="PANTHER" id="PTHR33442">
    <property type="entry name" value="TRANS-3-HYDROXY-L-PROLINE DEHYDRATASE"/>
    <property type="match status" value="1"/>
</dbReference>
<dbReference type="Pfam" id="PF05544">
    <property type="entry name" value="Pro_racemase"/>
    <property type="match status" value="1"/>
</dbReference>
<dbReference type="PIRSF" id="PIRSF029792">
    <property type="entry name" value="Pro_racemase"/>
    <property type="match status" value="1"/>
</dbReference>
<dbReference type="SFLD" id="SFLDS00028">
    <property type="entry name" value="Proline_Racemase"/>
    <property type="match status" value="1"/>
</dbReference>
<dbReference type="SUPFAM" id="SSF54506">
    <property type="entry name" value="Diaminopimelate epimerase-like"/>
    <property type="match status" value="1"/>
</dbReference>
<evidence type="ECO:0000250" key="1">
    <source>
        <dbReference type="UniProtKB" id="B9JQV3"/>
    </source>
</evidence>
<evidence type="ECO:0000269" key="2">
    <source>
    </source>
</evidence>
<evidence type="ECO:0000303" key="3">
    <source>
    </source>
</evidence>
<evidence type="ECO:0000305" key="4"/>
<evidence type="ECO:0000312" key="5">
    <source>
        <dbReference type="EMBL" id="AAK86213.1"/>
    </source>
</evidence>
<keyword id="KW-0413">Isomerase</keyword>
<keyword id="KW-1185">Reference proteome</keyword>
<gene>
    <name evidence="5" type="ordered locus">Atu0398</name>
</gene>
<reference key="1">
    <citation type="journal article" date="2001" name="Science">
        <title>The genome of the natural genetic engineer Agrobacterium tumefaciens C58.</title>
        <authorList>
            <person name="Wood D.W."/>
            <person name="Setubal J.C."/>
            <person name="Kaul R."/>
            <person name="Monks D.E."/>
            <person name="Kitajima J.P."/>
            <person name="Okura V.K."/>
            <person name="Zhou Y."/>
            <person name="Chen L."/>
            <person name="Wood G.E."/>
            <person name="Almeida N.F. Jr."/>
            <person name="Woo L."/>
            <person name="Chen Y."/>
            <person name="Paulsen I.T."/>
            <person name="Eisen J.A."/>
            <person name="Karp P.D."/>
            <person name="Bovee D. Sr."/>
            <person name="Chapman P."/>
            <person name="Clendenning J."/>
            <person name="Deatherage G."/>
            <person name="Gillet W."/>
            <person name="Grant C."/>
            <person name="Kutyavin T."/>
            <person name="Levy R."/>
            <person name="Li M.-J."/>
            <person name="McClelland E."/>
            <person name="Palmieri A."/>
            <person name="Raymond C."/>
            <person name="Rouse G."/>
            <person name="Saenphimmachak C."/>
            <person name="Wu Z."/>
            <person name="Romero P."/>
            <person name="Gordon D."/>
            <person name="Zhang S."/>
            <person name="Yoo H."/>
            <person name="Tao Y."/>
            <person name="Biddle P."/>
            <person name="Jung M."/>
            <person name="Krespan W."/>
            <person name="Perry M."/>
            <person name="Gordon-Kamm B."/>
            <person name="Liao L."/>
            <person name="Kim S."/>
            <person name="Hendrick C."/>
            <person name="Zhao Z.-Y."/>
            <person name="Dolan M."/>
            <person name="Chumley F."/>
            <person name="Tingey S.V."/>
            <person name="Tomb J.-F."/>
            <person name="Gordon M.P."/>
            <person name="Olson M.V."/>
            <person name="Nester E.W."/>
        </authorList>
    </citation>
    <scope>NUCLEOTIDE SEQUENCE [LARGE SCALE GENOMIC DNA]</scope>
    <source>
        <strain>C58 / ATCC 33970</strain>
    </source>
</reference>
<reference key="2">
    <citation type="journal article" date="2001" name="Science">
        <title>Genome sequence of the plant pathogen and biotechnology agent Agrobacterium tumefaciens C58.</title>
        <authorList>
            <person name="Goodner B."/>
            <person name="Hinkle G."/>
            <person name="Gattung S."/>
            <person name="Miller N."/>
            <person name="Blanchard M."/>
            <person name="Qurollo B."/>
            <person name="Goldman B.S."/>
            <person name="Cao Y."/>
            <person name="Askenazi M."/>
            <person name="Halling C."/>
            <person name="Mullin L."/>
            <person name="Houmiel K."/>
            <person name="Gordon J."/>
            <person name="Vaudin M."/>
            <person name="Iartchouk O."/>
            <person name="Epp A."/>
            <person name="Liu F."/>
            <person name="Wollam C."/>
            <person name="Allinger M."/>
            <person name="Doughty D."/>
            <person name="Scott C."/>
            <person name="Lappas C."/>
            <person name="Markelz B."/>
            <person name="Flanagan C."/>
            <person name="Crowell C."/>
            <person name="Gurson J."/>
            <person name="Lomo C."/>
            <person name="Sear C."/>
            <person name="Strub G."/>
            <person name="Cielo C."/>
            <person name="Slater S."/>
        </authorList>
    </citation>
    <scope>NUCLEOTIDE SEQUENCE [LARGE SCALE GENOMIC DNA]</scope>
    <source>
        <strain>C58 / ATCC 33970</strain>
    </source>
</reference>
<reference key="3">
    <citation type="journal article" date="2014" name="Elife">
        <title>Prediction and characterization of enzymatic activities guided by sequence similarity and genome neighborhood networks.</title>
        <authorList>
            <person name="Zhao S."/>
            <person name="Sakai A."/>
            <person name="Zhang X."/>
            <person name="Vetting M.W."/>
            <person name="Kumar R."/>
            <person name="Hillerich B."/>
            <person name="San Francisco B."/>
            <person name="Solbiati J."/>
            <person name="Steves A."/>
            <person name="Brown S."/>
            <person name="Akiva E."/>
            <person name="Barber A."/>
            <person name="Seidel R.D."/>
            <person name="Babbitt P.C."/>
            <person name="Almo S.C."/>
            <person name="Gerlt J.A."/>
            <person name="Jacobson M.P."/>
        </authorList>
    </citation>
    <scope>FUNCTION</scope>
    <scope>CATALYTIC ACTIVITY</scope>
    <scope>BIOPHYSICOCHEMICAL PROPERTIES</scope>
    <scope>INDUCTION</scope>
    <source>
        <strain>C58 / ATCC 33970</strain>
    </source>
</reference>
<accession>A9CKB4</accession>
<proteinExistence type="evidence at protein level"/>